<dbReference type="EC" id="7.1.1.-" evidence="1"/>
<dbReference type="EMBL" id="CP000911">
    <property type="protein sequence ID" value="ABY37917.1"/>
    <property type="molecule type" value="Genomic_DNA"/>
</dbReference>
<dbReference type="RefSeq" id="WP_006072559.1">
    <property type="nucleotide sequence ID" value="NC_010169.1"/>
</dbReference>
<dbReference type="SMR" id="B0CLD7"/>
<dbReference type="KEGG" id="bmt:BSUIS_A0849"/>
<dbReference type="HOGENOM" id="CLU_067218_5_1_5"/>
<dbReference type="Proteomes" id="UP000008545">
    <property type="component" value="Chromosome I"/>
</dbReference>
<dbReference type="GO" id="GO:0005886">
    <property type="term" value="C:plasma membrane"/>
    <property type="evidence" value="ECO:0007669"/>
    <property type="project" value="UniProtKB-SubCell"/>
</dbReference>
<dbReference type="GO" id="GO:0051539">
    <property type="term" value="F:4 iron, 4 sulfur cluster binding"/>
    <property type="evidence" value="ECO:0007669"/>
    <property type="project" value="UniProtKB-KW"/>
</dbReference>
<dbReference type="GO" id="GO:0005506">
    <property type="term" value="F:iron ion binding"/>
    <property type="evidence" value="ECO:0007669"/>
    <property type="project" value="UniProtKB-UniRule"/>
</dbReference>
<dbReference type="GO" id="GO:0050136">
    <property type="term" value="F:NADH:ubiquinone reductase (non-electrogenic) activity"/>
    <property type="evidence" value="ECO:0007669"/>
    <property type="project" value="UniProtKB-UniRule"/>
</dbReference>
<dbReference type="GO" id="GO:0048038">
    <property type="term" value="F:quinone binding"/>
    <property type="evidence" value="ECO:0007669"/>
    <property type="project" value="UniProtKB-KW"/>
</dbReference>
<dbReference type="GO" id="GO:0009060">
    <property type="term" value="P:aerobic respiration"/>
    <property type="evidence" value="ECO:0007669"/>
    <property type="project" value="TreeGrafter"/>
</dbReference>
<dbReference type="FunFam" id="3.30.70.3270:FF:000001">
    <property type="entry name" value="NADH-quinone oxidoreductase subunit I 1"/>
    <property type="match status" value="1"/>
</dbReference>
<dbReference type="Gene3D" id="3.30.70.3270">
    <property type="match status" value="1"/>
</dbReference>
<dbReference type="HAMAP" id="MF_01351">
    <property type="entry name" value="NDH1_NuoI"/>
    <property type="match status" value="1"/>
</dbReference>
<dbReference type="InterPro" id="IPR017896">
    <property type="entry name" value="4Fe4S_Fe-S-bd"/>
</dbReference>
<dbReference type="InterPro" id="IPR017900">
    <property type="entry name" value="4Fe4S_Fe_S_CS"/>
</dbReference>
<dbReference type="InterPro" id="IPR010226">
    <property type="entry name" value="NADH_quinone_OxRdtase_chainI"/>
</dbReference>
<dbReference type="NCBIfam" id="TIGR01971">
    <property type="entry name" value="NuoI"/>
    <property type="match status" value="1"/>
</dbReference>
<dbReference type="NCBIfam" id="NF004538">
    <property type="entry name" value="PRK05888.1-4"/>
    <property type="match status" value="1"/>
</dbReference>
<dbReference type="NCBIfam" id="NF004539">
    <property type="entry name" value="PRK05888.1-5"/>
    <property type="match status" value="1"/>
</dbReference>
<dbReference type="PANTHER" id="PTHR10849:SF20">
    <property type="entry name" value="NADH DEHYDROGENASE [UBIQUINONE] IRON-SULFUR PROTEIN 8, MITOCHONDRIAL"/>
    <property type="match status" value="1"/>
</dbReference>
<dbReference type="PANTHER" id="PTHR10849">
    <property type="entry name" value="NADH DEHYDROGENASE UBIQUINONE IRON-SULFUR PROTEIN 8, MITOCHONDRIAL"/>
    <property type="match status" value="1"/>
</dbReference>
<dbReference type="Pfam" id="PF12838">
    <property type="entry name" value="Fer4_7"/>
    <property type="match status" value="1"/>
</dbReference>
<dbReference type="SUPFAM" id="SSF54862">
    <property type="entry name" value="4Fe-4S ferredoxins"/>
    <property type="match status" value="1"/>
</dbReference>
<dbReference type="PROSITE" id="PS00198">
    <property type="entry name" value="4FE4S_FER_1"/>
    <property type="match status" value="2"/>
</dbReference>
<dbReference type="PROSITE" id="PS51379">
    <property type="entry name" value="4FE4S_FER_2"/>
    <property type="match status" value="2"/>
</dbReference>
<comment type="function">
    <text evidence="1">NDH-1 shuttles electrons from NADH, via FMN and iron-sulfur (Fe-S) centers, to quinones in the respiratory chain. The immediate electron acceptor for the enzyme in this species is believed to be ubiquinone. Couples the redox reaction to proton translocation (for every two electrons transferred, four hydrogen ions are translocated across the cytoplasmic membrane), and thus conserves the redox energy in a proton gradient.</text>
</comment>
<comment type="catalytic activity">
    <reaction evidence="1">
        <text>a quinone + NADH + 5 H(+)(in) = a quinol + NAD(+) + 4 H(+)(out)</text>
        <dbReference type="Rhea" id="RHEA:57888"/>
        <dbReference type="ChEBI" id="CHEBI:15378"/>
        <dbReference type="ChEBI" id="CHEBI:24646"/>
        <dbReference type="ChEBI" id="CHEBI:57540"/>
        <dbReference type="ChEBI" id="CHEBI:57945"/>
        <dbReference type="ChEBI" id="CHEBI:132124"/>
    </reaction>
</comment>
<comment type="cofactor">
    <cofactor evidence="1">
        <name>[4Fe-4S] cluster</name>
        <dbReference type="ChEBI" id="CHEBI:49883"/>
    </cofactor>
    <text evidence="1">Binds 2 [4Fe-4S] clusters per subunit.</text>
</comment>
<comment type="subunit">
    <text evidence="1">NDH-1 is composed of 14 different subunits. Subunits NuoA, H, J, K, L, M, N constitute the membrane sector of the complex.</text>
</comment>
<comment type="subcellular location">
    <subcellularLocation>
        <location evidence="1">Cell inner membrane</location>
        <topology evidence="1">Peripheral membrane protein</topology>
    </subcellularLocation>
</comment>
<comment type="similarity">
    <text evidence="1">Belongs to the complex I 23 kDa subunit family.</text>
</comment>
<gene>
    <name evidence="1" type="primary">nuoI</name>
    <name type="ordered locus">BSUIS_A0849</name>
</gene>
<keyword id="KW-0004">4Fe-4S</keyword>
<keyword id="KW-0997">Cell inner membrane</keyword>
<keyword id="KW-1003">Cell membrane</keyword>
<keyword id="KW-0408">Iron</keyword>
<keyword id="KW-0411">Iron-sulfur</keyword>
<keyword id="KW-0472">Membrane</keyword>
<keyword id="KW-0479">Metal-binding</keyword>
<keyword id="KW-0520">NAD</keyword>
<keyword id="KW-0874">Quinone</keyword>
<keyword id="KW-0677">Repeat</keyword>
<keyword id="KW-1278">Translocase</keyword>
<keyword id="KW-0830">Ubiquinone</keyword>
<reference key="1">
    <citation type="submission" date="2007-12" db="EMBL/GenBank/DDBJ databases">
        <title>Brucella suis ATCC 23445 whole genome shotgun sequencing project.</title>
        <authorList>
            <person name="Setubal J.C."/>
            <person name="Bowns C."/>
            <person name="Boyle S."/>
            <person name="Crasta O.R."/>
            <person name="Czar M.J."/>
            <person name="Dharmanolla C."/>
            <person name="Gillespie J.J."/>
            <person name="Kenyon R.W."/>
            <person name="Lu J."/>
            <person name="Mane S."/>
            <person name="Mohapatra S."/>
            <person name="Nagrani S."/>
            <person name="Purkayastha A."/>
            <person name="Rajasimha H.K."/>
            <person name="Shallom J.M."/>
            <person name="Shallom S."/>
            <person name="Shukla M."/>
            <person name="Snyder E.E."/>
            <person name="Sobral B.W."/>
            <person name="Wattam A.R."/>
            <person name="Will R."/>
            <person name="Williams K."/>
            <person name="Yoo H."/>
            <person name="Bruce D."/>
            <person name="Detter C."/>
            <person name="Munk C."/>
            <person name="Brettin T.S."/>
        </authorList>
    </citation>
    <scope>NUCLEOTIDE SEQUENCE [LARGE SCALE GENOMIC DNA]</scope>
    <source>
        <strain>ATCC 23445 / NCTC 10510</strain>
    </source>
</reference>
<feature type="chain" id="PRO_1000086952" description="NADH-quinone oxidoreductase subunit I">
    <location>
        <begin position="1"/>
        <end position="163"/>
    </location>
</feature>
<feature type="domain" description="4Fe-4S ferredoxin-type 1" evidence="1">
    <location>
        <begin position="53"/>
        <end position="83"/>
    </location>
</feature>
<feature type="domain" description="4Fe-4S ferredoxin-type 2" evidence="1">
    <location>
        <begin position="94"/>
        <end position="123"/>
    </location>
</feature>
<feature type="binding site" evidence="1">
    <location>
        <position position="63"/>
    </location>
    <ligand>
        <name>[4Fe-4S] cluster</name>
        <dbReference type="ChEBI" id="CHEBI:49883"/>
        <label>1</label>
    </ligand>
</feature>
<feature type="binding site" evidence="1">
    <location>
        <position position="66"/>
    </location>
    <ligand>
        <name>[4Fe-4S] cluster</name>
        <dbReference type="ChEBI" id="CHEBI:49883"/>
        <label>1</label>
    </ligand>
</feature>
<feature type="binding site" evidence="1">
    <location>
        <position position="69"/>
    </location>
    <ligand>
        <name>[4Fe-4S] cluster</name>
        <dbReference type="ChEBI" id="CHEBI:49883"/>
        <label>1</label>
    </ligand>
</feature>
<feature type="binding site" evidence="1">
    <location>
        <position position="73"/>
    </location>
    <ligand>
        <name>[4Fe-4S] cluster</name>
        <dbReference type="ChEBI" id="CHEBI:49883"/>
        <label>2</label>
    </ligand>
</feature>
<feature type="binding site" evidence="1">
    <location>
        <position position="103"/>
    </location>
    <ligand>
        <name>[4Fe-4S] cluster</name>
        <dbReference type="ChEBI" id="CHEBI:49883"/>
        <label>2</label>
    </ligand>
</feature>
<feature type="binding site" evidence="1">
    <location>
        <position position="106"/>
    </location>
    <ligand>
        <name>[4Fe-4S] cluster</name>
        <dbReference type="ChEBI" id="CHEBI:49883"/>
        <label>2</label>
    </ligand>
</feature>
<feature type="binding site" evidence="1">
    <location>
        <position position="109"/>
    </location>
    <ligand>
        <name>[4Fe-4S] cluster</name>
        <dbReference type="ChEBI" id="CHEBI:49883"/>
        <label>2</label>
    </ligand>
</feature>
<feature type="binding site" evidence="1">
    <location>
        <position position="113"/>
    </location>
    <ligand>
        <name>[4Fe-4S] cluster</name>
        <dbReference type="ChEBI" id="CHEBI:49883"/>
        <label>1</label>
    </ligand>
</feature>
<evidence type="ECO:0000255" key="1">
    <source>
        <dbReference type="HAMAP-Rule" id="MF_01351"/>
    </source>
</evidence>
<name>NUOI_BRUSI</name>
<organism>
    <name type="scientific">Brucella suis (strain ATCC 23445 / NCTC 10510)</name>
    <dbReference type="NCBI Taxonomy" id="470137"/>
    <lineage>
        <taxon>Bacteria</taxon>
        <taxon>Pseudomonadati</taxon>
        <taxon>Pseudomonadota</taxon>
        <taxon>Alphaproteobacteria</taxon>
        <taxon>Hyphomicrobiales</taxon>
        <taxon>Brucellaceae</taxon>
        <taxon>Brucella/Ochrobactrum group</taxon>
        <taxon>Brucella</taxon>
    </lineage>
</organism>
<proteinExistence type="inferred from homology"/>
<accession>B0CLD7</accession>
<protein>
    <recommendedName>
        <fullName evidence="1">NADH-quinone oxidoreductase subunit I</fullName>
        <ecNumber evidence="1">7.1.1.-</ecNumber>
    </recommendedName>
    <alternativeName>
        <fullName evidence="1">NADH dehydrogenase I subunit I</fullName>
    </alternativeName>
    <alternativeName>
        <fullName evidence="1">NDH-1 subunit I</fullName>
    </alternativeName>
</protein>
<sequence length="163" mass="18506">MASITQAAKSLLLKEFASAFALSMRQFFAPKATLNYPHEKGPVSPRFRGEHALRRYPNGEERCIACKLCEAICPAQAITIEAGPRRNDGTRRTVRYDIDMVKCIYCGFCQEACPVDAIVEGPNFEFATETREELYYDKDKLLANGDRWELEIARNIAMDAPYR</sequence>